<proteinExistence type="evidence at protein level"/>
<organism>
    <name type="scientific">Nostoc sp. (strain PCC 7120 / SAG 25.82 / UTEX 2576)</name>
    <dbReference type="NCBI Taxonomy" id="103690"/>
    <lineage>
        <taxon>Bacteria</taxon>
        <taxon>Bacillati</taxon>
        <taxon>Cyanobacteriota</taxon>
        <taxon>Cyanophyceae</taxon>
        <taxon>Nostocales</taxon>
        <taxon>Nostocaceae</taxon>
        <taxon>Nostoc</taxon>
    </lineage>
</organism>
<dbReference type="EC" id="4.-.-.-"/>
<dbReference type="EMBL" id="AF178757">
    <property type="protein sequence ID" value="AAG09321.1"/>
    <property type="molecule type" value="Genomic_DNA"/>
</dbReference>
<dbReference type="EMBL" id="BA000019">
    <property type="protein sequence ID" value="BAB72491.1"/>
    <property type="molecule type" value="Genomic_DNA"/>
</dbReference>
<dbReference type="EMBL" id="M80435">
    <property type="protein sequence ID" value="AAA22035.1"/>
    <property type="molecule type" value="Genomic_DNA"/>
</dbReference>
<dbReference type="PIR" id="AD1873">
    <property type="entry name" value="AD1873"/>
</dbReference>
<dbReference type="PIR" id="PS0244">
    <property type="entry name" value="PS0244"/>
</dbReference>
<dbReference type="RefSeq" id="WP_010994709.1">
    <property type="nucleotide sequence ID" value="NZ_RSCN01000059.1"/>
</dbReference>
<dbReference type="PDB" id="5N3U">
    <property type="method" value="X-ray"/>
    <property type="resolution" value="1.89 A"/>
    <property type="chains" value="B=1-200"/>
</dbReference>
<dbReference type="PDBsum" id="5N3U"/>
<dbReference type="SMR" id="P29985"/>
<dbReference type="STRING" id="103690.gene:10492544"/>
<dbReference type="KEGG" id="ana:alr0533"/>
<dbReference type="eggNOG" id="COG1413">
    <property type="taxonomic scope" value="Bacteria"/>
</dbReference>
<dbReference type="OrthoDB" id="428465at2"/>
<dbReference type="BRENDA" id="4.4.1.32">
    <property type="organism ID" value="8113"/>
</dbReference>
<dbReference type="Proteomes" id="UP000002483">
    <property type="component" value="Chromosome"/>
</dbReference>
<dbReference type="GO" id="GO:0030089">
    <property type="term" value="C:phycobilisome"/>
    <property type="evidence" value="ECO:0007669"/>
    <property type="project" value="UniProtKB-KW"/>
</dbReference>
<dbReference type="GO" id="GO:0016829">
    <property type="term" value="F:lyase activity"/>
    <property type="evidence" value="ECO:0007669"/>
    <property type="project" value="UniProtKB-KW"/>
</dbReference>
<dbReference type="Gene3D" id="1.25.10.10">
    <property type="entry name" value="Leucine-rich Repeat Variant"/>
    <property type="match status" value="1"/>
</dbReference>
<dbReference type="InterPro" id="IPR011989">
    <property type="entry name" value="ARM-like"/>
</dbReference>
<dbReference type="InterPro" id="IPR016024">
    <property type="entry name" value="ARM-type_fold"/>
</dbReference>
<dbReference type="Pfam" id="PF13646">
    <property type="entry name" value="HEAT_2"/>
    <property type="match status" value="1"/>
</dbReference>
<dbReference type="SUPFAM" id="SSF48371">
    <property type="entry name" value="ARM repeat"/>
    <property type="match status" value="1"/>
</dbReference>
<accession>P29985</accession>
<accession>Q9F459</accession>
<gene>
    <name type="primary">cpcF</name>
    <name type="ordered locus">alr0533</name>
</gene>
<keyword id="KW-0002">3D-structure</keyword>
<keyword id="KW-0042">Antenna complex</keyword>
<keyword id="KW-0456">Lyase</keyword>
<keyword id="KW-0605">Phycobilisome</keyword>
<keyword id="KW-1185">Reference proteome</keyword>
<feature type="chain" id="PRO_0000199276" description="Phycocyanobilin lyase subunit beta">
    <location>
        <begin position="1"/>
        <end position="200"/>
    </location>
</feature>
<feature type="helix" evidence="3">
    <location>
        <begin position="31"/>
        <end position="33"/>
    </location>
</feature>
<feature type="helix" evidence="3">
    <location>
        <begin position="34"/>
        <end position="40"/>
    </location>
</feature>
<feature type="helix" evidence="3">
    <location>
        <begin position="46"/>
        <end position="59"/>
    </location>
</feature>
<feature type="helix" evidence="3">
    <location>
        <begin position="60"/>
        <end position="63"/>
    </location>
</feature>
<feature type="helix" evidence="3">
    <location>
        <begin position="64"/>
        <end position="69"/>
    </location>
</feature>
<feature type="helix" evidence="3">
    <location>
        <begin position="76"/>
        <end position="89"/>
    </location>
</feature>
<feature type="helix" evidence="3">
    <location>
        <begin position="92"/>
        <end position="94"/>
    </location>
</feature>
<feature type="helix" evidence="3">
    <location>
        <begin position="95"/>
        <end position="104"/>
    </location>
</feature>
<feature type="helix" evidence="3">
    <location>
        <begin position="108"/>
        <end position="118"/>
    </location>
</feature>
<feature type="helix" evidence="3">
    <location>
        <begin position="123"/>
        <end position="125"/>
    </location>
</feature>
<feature type="helix" evidence="3">
    <location>
        <begin position="130"/>
        <end position="145"/>
    </location>
</feature>
<feature type="helix" evidence="3">
    <location>
        <begin position="151"/>
        <end position="163"/>
    </location>
</feature>
<feature type="helix" evidence="3">
    <location>
        <begin position="164"/>
        <end position="166"/>
    </location>
</feature>
<feature type="helix" evidence="3">
    <location>
        <begin position="168"/>
        <end position="170"/>
    </location>
</feature>
<feature type="helix" evidence="3">
    <location>
        <begin position="171"/>
        <end position="184"/>
    </location>
</feature>
<feature type="helix" evidence="3">
    <location>
        <begin position="188"/>
        <end position="198"/>
    </location>
</feature>
<evidence type="ECO:0000250" key="1"/>
<evidence type="ECO:0000305" key="2"/>
<evidence type="ECO:0007829" key="3">
    <source>
        <dbReference type="PDB" id="5N3U"/>
    </source>
</evidence>
<sequence length="200" mass="21488">MTNELINGVALADTPEKLVKAVQELALAKDVAAIPTLIAVFGYNNPTAAAIASTALVQLGEVAVPQLLTQIDDYNYGARAYSIRTLAAIADPRALDVLIDAAATDFAPSVRRAAAKGLGNLHWHKLEFPDNQTAPKKALETLLFISQDAEWSIRYAAIVGLQGLVNIPDLQQPIHTRLKEMLASDAEKAVRARILLAQSQ</sequence>
<reference key="1">
    <citation type="journal article" date="2001" name="Anal. Biochem.">
        <title>Recombinant phycobiliproteins. Recombinant C-phycocyanins equipped with affinity tags, oligomerization, and biospecific recognition domains.</title>
        <authorList>
            <person name="Cai Y.A."/>
            <person name="Murphy J.T."/>
            <person name="Wedemayer G.J."/>
            <person name="Glazer A.N."/>
        </authorList>
    </citation>
    <scope>NUCLEOTIDE SEQUENCE [GENOMIC DNA]</scope>
</reference>
<reference key="2">
    <citation type="journal article" date="2001" name="DNA Res.">
        <title>Complete genomic sequence of the filamentous nitrogen-fixing cyanobacterium Anabaena sp. strain PCC 7120.</title>
        <authorList>
            <person name="Kaneko T."/>
            <person name="Nakamura Y."/>
            <person name="Wolk C.P."/>
            <person name="Kuritz T."/>
            <person name="Sasamoto S."/>
            <person name="Watanabe A."/>
            <person name="Iriguchi M."/>
            <person name="Ishikawa A."/>
            <person name="Kawashima K."/>
            <person name="Kimura T."/>
            <person name="Kishida Y."/>
            <person name="Kohara M."/>
            <person name="Matsumoto M."/>
            <person name="Matsuno A."/>
            <person name="Muraki A."/>
            <person name="Nakazaki N."/>
            <person name="Shimpo S."/>
            <person name="Sugimoto M."/>
            <person name="Takazawa M."/>
            <person name="Yamada M."/>
            <person name="Yasuda M."/>
            <person name="Tabata S."/>
        </authorList>
    </citation>
    <scope>NUCLEOTIDE SEQUENCE [LARGE SCALE GENOMIC DNA]</scope>
    <source>
        <strain>PCC 7120 / SAG 25.82 / UTEX 2576</strain>
    </source>
</reference>
<reference key="3">
    <citation type="journal article" date="1991" name="Gene">
        <title>A small multigene family encodes the rod-core linker polypeptides of Anabaena sp. PCC7120 phycobilisomes.</title>
        <authorList>
            <person name="Bryant D.A."/>
            <person name="Stirewalt V.L."/>
            <person name="Glauser M."/>
            <person name="Frank G."/>
            <person name="Sidler W."/>
            <person name="Zuber H."/>
        </authorList>
    </citation>
    <scope>NUCLEOTIDE SEQUENCE [GENOMIC DNA] OF 138-200</scope>
    <source>
        <strain>PCC 7120 / SAG 25.82 / UTEX 2576</strain>
    </source>
</reference>
<comment type="function">
    <text evidence="1">Required for the chromophorylation of the CpcA gene product.</text>
</comment>
<comment type="subunit">
    <text evidence="1">CpcE and CpcF associate to form a lyase.</text>
</comment>
<comment type="similarity">
    <text evidence="2">Belongs to the CpcE/RpcE/PecE family.</text>
</comment>
<protein>
    <recommendedName>
        <fullName>Phycocyanobilin lyase subunit beta</fullName>
        <ecNumber>4.-.-.-</ecNumber>
    </recommendedName>
    <alternativeName>
        <fullName>Phycocyanin operon protein CpcF</fullName>
    </alternativeName>
</protein>
<name>CPCF_NOSS1</name>